<feature type="initiator methionine" description="Removed" evidence="3">
    <location>
        <position position="1"/>
    </location>
</feature>
<feature type="chain" id="PRO_0000104432" description="Large ribosomal subunit protein uL11">
    <location>
        <begin position="2"/>
        <end position="163"/>
    </location>
</feature>
<feature type="region of interest" description="Disordered" evidence="2">
    <location>
        <begin position="1"/>
        <end position="26"/>
    </location>
</feature>
<gene>
    <name evidence="1" type="primary">rpl11</name>
    <name type="ordered locus">VNG_1108G</name>
</gene>
<keyword id="KW-0903">Direct protein sequencing</keyword>
<keyword id="KW-1185">Reference proteome</keyword>
<keyword id="KW-0687">Ribonucleoprotein</keyword>
<keyword id="KW-0689">Ribosomal protein</keyword>
<keyword id="KW-0694">RNA-binding</keyword>
<keyword id="KW-0699">rRNA-binding</keyword>
<comment type="function">
    <text evidence="1">Forms part of the ribosomal stalk which helps the ribosome interact with GTP-bound translation factors.</text>
</comment>
<comment type="subunit">
    <text evidence="1">Part of the ribosomal stalk of the 50S ribosomal subunit. Interacts with L10 and the large rRNA to form the base of the stalk. L10 forms an elongated spine to which L12 dimers bind in a sequential fashion forming a multimeric L10(L12)X complex.</text>
</comment>
<comment type="similarity">
    <text evidence="1">Belongs to the universal ribosomal protein uL11 family.</text>
</comment>
<dbReference type="EMBL" id="X15078">
    <property type="protein sequence ID" value="CAA33178.1"/>
    <property type="molecule type" value="Genomic_DNA"/>
</dbReference>
<dbReference type="EMBL" id="AE004437">
    <property type="protein sequence ID" value="AAG19501.1"/>
    <property type="molecule type" value="Genomic_DNA"/>
</dbReference>
<dbReference type="PIR" id="A84267">
    <property type="entry name" value="A84267"/>
</dbReference>
<dbReference type="PIR" id="S04118">
    <property type="entry name" value="R5HSC1"/>
</dbReference>
<dbReference type="RefSeq" id="WP_010902796.1">
    <property type="nucleotide sequence ID" value="NC_002607.1"/>
</dbReference>
<dbReference type="SMR" id="P05969"/>
<dbReference type="FunCoup" id="P05969">
    <property type="interactions" value="143"/>
</dbReference>
<dbReference type="STRING" id="64091.VNG_1108G"/>
<dbReference type="PaxDb" id="64091-VNG_1108G"/>
<dbReference type="KEGG" id="hal:VNG_1108G"/>
<dbReference type="PATRIC" id="fig|64091.14.peg.847"/>
<dbReference type="HOGENOM" id="CLU_074237_4_0_2"/>
<dbReference type="InParanoid" id="P05969"/>
<dbReference type="OrthoDB" id="8842at2157"/>
<dbReference type="PhylomeDB" id="P05969"/>
<dbReference type="Proteomes" id="UP000000554">
    <property type="component" value="Chromosome"/>
</dbReference>
<dbReference type="GO" id="GO:0015934">
    <property type="term" value="C:large ribosomal subunit"/>
    <property type="evidence" value="ECO:0000318"/>
    <property type="project" value="GO_Central"/>
</dbReference>
<dbReference type="GO" id="GO:0070180">
    <property type="term" value="F:large ribosomal subunit rRNA binding"/>
    <property type="evidence" value="ECO:0000318"/>
    <property type="project" value="GO_Central"/>
</dbReference>
<dbReference type="GO" id="GO:0003735">
    <property type="term" value="F:structural constituent of ribosome"/>
    <property type="evidence" value="ECO:0000318"/>
    <property type="project" value="GO_Central"/>
</dbReference>
<dbReference type="GO" id="GO:0006412">
    <property type="term" value="P:translation"/>
    <property type="evidence" value="ECO:0000318"/>
    <property type="project" value="GO_Central"/>
</dbReference>
<dbReference type="CDD" id="cd00349">
    <property type="entry name" value="Ribosomal_L11"/>
    <property type="match status" value="1"/>
</dbReference>
<dbReference type="FunFam" id="1.10.10.250:FF:000006">
    <property type="entry name" value="50S ribosomal protein L11"/>
    <property type="match status" value="1"/>
</dbReference>
<dbReference type="Gene3D" id="1.10.10.250">
    <property type="entry name" value="Ribosomal protein L11, C-terminal domain"/>
    <property type="match status" value="1"/>
</dbReference>
<dbReference type="Gene3D" id="3.30.1550.10">
    <property type="entry name" value="Ribosomal protein L11/L12, N-terminal domain"/>
    <property type="match status" value="1"/>
</dbReference>
<dbReference type="HAMAP" id="MF_00736">
    <property type="entry name" value="Ribosomal_uL11"/>
    <property type="match status" value="1"/>
</dbReference>
<dbReference type="InterPro" id="IPR000911">
    <property type="entry name" value="Ribosomal_uL11"/>
</dbReference>
<dbReference type="InterPro" id="IPR020783">
    <property type="entry name" value="Ribosomal_uL11_C"/>
</dbReference>
<dbReference type="InterPro" id="IPR036769">
    <property type="entry name" value="Ribosomal_uL11_C_sf"/>
</dbReference>
<dbReference type="InterPro" id="IPR020785">
    <property type="entry name" value="Ribosomal_uL11_CS"/>
</dbReference>
<dbReference type="InterPro" id="IPR020784">
    <property type="entry name" value="Ribosomal_uL11_N"/>
</dbReference>
<dbReference type="InterPro" id="IPR036796">
    <property type="entry name" value="Ribosomal_uL11_N_sf"/>
</dbReference>
<dbReference type="NCBIfam" id="NF002232">
    <property type="entry name" value="PRK01143.1"/>
    <property type="match status" value="1"/>
</dbReference>
<dbReference type="PANTHER" id="PTHR11661">
    <property type="entry name" value="60S RIBOSOMAL PROTEIN L12"/>
    <property type="match status" value="1"/>
</dbReference>
<dbReference type="PANTHER" id="PTHR11661:SF1">
    <property type="entry name" value="LARGE RIBOSOMAL SUBUNIT PROTEIN UL11M"/>
    <property type="match status" value="1"/>
</dbReference>
<dbReference type="Pfam" id="PF00298">
    <property type="entry name" value="Ribosomal_L11"/>
    <property type="match status" value="1"/>
</dbReference>
<dbReference type="Pfam" id="PF03946">
    <property type="entry name" value="Ribosomal_L11_N"/>
    <property type="match status" value="1"/>
</dbReference>
<dbReference type="SMART" id="SM00649">
    <property type="entry name" value="RL11"/>
    <property type="match status" value="1"/>
</dbReference>
<dbReference type="SUPFAM" id="SSF54747">
    <property type="entry name" value="Ribosomal L11/L12e N-terminal domain"/>
    <property type="match status" value="1"/>
</dbReference>
<dbReference type="SUPFAM" id="SSF46906">
    <property type="entry name" value="Ribosomal protein L11, C-terminal domain"/>
    <property type="match status" value="1"/>
</dbReference>
<dbReference type="PROSITE" id="PS00359">
    <property type="entry name" value="RIBOSOMAL_L11"/>
    <property type="match status" value="1"/>
</dbReference>
<organism>
    <name type="scientific">Halobacterium salinarum (strain ATCC 700922 / JCM 11081 / NRC-1)</name>
    <name type="common">Halobacterium halobium</name>
    <dbReference type="NCBI Taxonomy" id="64091"/>
    <lineage>
        <taxon>Archaea</taxon>
        <taxon>Methanobacteriati</taxon>
        <taxon>Methanobacteriota</taxon>
        <taxon>Stenosarchaea group</taxon>
        <taxon>Halobacteria</taxon>
        <taxon>Halobacteriales</taxon>
        <taxon>Halobacteriaceae</taxon>
        <taxon>Halobacterium</taxon>
        <taxon>Halobacterium salinarum NRC-34001</taxon>
    </lineage>
</organism>
<protein>
    <recommendedName>
        <fullName evidence="1">Large ribosomal subunit protein uL11</fullName>
    </recommendedName>
    <alternativeName>
        <fullName evidence="4">50S ribosomal protein L11</fullName>
    </alternativeName>
</protein>
<name>RL11_HALSA</name>
<proteinExistence type="evidence at protein level"/>
<reference key="1">
    <citation type="journal article" date="1989" name="EMBO J.">
        <title>Characterization of the L11, L1, L10 and L12 equivalent ribosomal protein gene cluster of the halophilic archaebacterium Halobacterium cutirubrum.</title>
        <authorList>
            <person name="Shimmin L.C."/>
            <person name="Dennis P.P."/>
        </authorList>
    </citation>
    <scope>NUCLEOTIDE SEQUENCE [GENOMIC DNA]</scope>
    <source>
        <strain>ATCC 33170 / DSM 669 / NCCB 81095 / NRC 34001</strain>
    </source>
</reference>
<reference key="2">
    <citation type="journal article" date="2000" name="Proc. Natl. Acad. Sci. U.S.A.">
        <title>Genome sequence of Halobacterium species NRC-1.</title>
        <authorList>
            <person name="Ng W.V."/>
            <person name="Kennedy S.P."/>
            <person name="Mahairas G.G."/>
            <person name="Berquist B."/>
            <person name="Pan M."/>
            <person name="Shukla H.D."/>
            <person name="Lasky S.R."/>
            <person name="Baliga N.S."/>
            <person name="Thorsson V."/>
            <person name="Sbrogna J."/>
            <person name="Swartzell S."/>
            <person name="Weir D."/>
            <person name="Hall J."/>
            <person name="Dahl T.A."/>
            <person name="Welti R."/>
            <person name="Goo Y.A."/>
            <person name="Leithauser B."/>
            <person name="Keller K."/>
            <person name="Cruz R."/>
            <person name="Danson M.J."/>
            <person name="Hough D.W."/>
            <person name="Maddocks D.G."/>
            <person name="Jablonski P.E."/>
            <person name="Krebs M.P."/>
            <person name="Angevine C.M."/>
            <person name="Dale H."/>
            <person name="Isenbarger T.A."/>
            <person name="Peck R.F."/>
            <person name="Pohlschroder M."/>
            <person name="Spudich J.L."/>
            <person name="Jung K.-H."/>
            <person name="Alam M."/>
            <person name="Freitas T."/>
            <person name="Hou S."/>
            <person name="Daniels C.J."/>
            <person name="Dennis P.P."/>
            <person name="Omer A.D."/>
            <person name="Ebhardt H."/>
            <person name="Lowe T.M."/>
            <person name="Liang P."/>
            <person name="Riley M."/>
            <person name="Hood L."/>
            <person name="DasSarma S."/>
        </authorList>
    </citation>
    <scope>NUCLEOTIDE SEQUENCE [LARGE SCALE GENOMIC DNA]</scope>
    <source>
        <strain>ATCC 700922 / JCM 11081 / NRC-1</strain>
    </source>
</reference>
<reference key="3">
    <citation type="journal article" date="1984" name="Can. J. Biochem. Cell Biol.">
        <title>Purification, properties, and N-terminal amino acid sequence of certain 50S ribosomal subunit proteins from the archaebacterium Halobacterium cutirubrum.</title>
        <authorList>
            <person name="Matheson A.T."/>
            <person name="Yaguchi M."/>
            <person name="Christensen P."/>
            <person name="Rollin C.F."/>
            <person name="Hasnain S."/>
        </authorList>
    </citation>
    <scope>PROTEIN SEQUENCE OF 2-35</scope>
</reference>
<accession>P05969</accession>
<accession>Q9HQL2</accession>
<evidence type="ECO:0000255" key="1">
    <source>
        <dbReference type="HAMAP-Rule" id="MF_00736"/>
    </source>
</evidence>
<evidence type="ECO:0000256" key="2">
    <source>
        <dbReference type="SAM" id="MobiDB-lite"/>
    </source>
</evidence>
<evidence type="ECO:0000269" key="3">
    <source>
    </source>
</evidence>
<evidence type="ECO:0000305" key="4"/>
<sequence>MAETIEVLVAGGQADPGPPLGPELGPTPVDVQAVVQEINDQTEAFDGTEVPVTIEYEDDGSFSIEVGVPPTAALVKDEAGFDTGSGEPQENFVADLSIEQLKTIAEQKKPDLLAYDARNAAKEVAGTCASLGVTIEGEDARTFNERVDDGDYDDVLGDELAAA</sequence>